<evidence type="ECO:0000255" key="1">
    <source>
        <dbReference type="HAMAP-Rule" id="MF_00788"/>
    </source>
</evidence>
<evidence type="ECO:0000305" key="2"/>
<protein>
    <recommendedName>
        <fullName evidence="1">Large ribosomal subunit protein eL40</fullName>
    </recommendedName>
    <alternativeName>
        <fullName evidence="2">50S ribosomal protein L40e</fullName>
    </alternativeName>
</protein>
<organism>
    <name type="scientific">Thermococcus onnurineus (strain NA1)</name>
    <dbReference type="NCBI Taxonomy" id="523850"/>
    <lineage>
        <taxon>Archaea</taxon>
        <taxon>Methanobacteriati</taxon>
        <taxon>Methanobacteriota</taxon>
        <taxon>Thermococci</taxon>
        <taxon>Thermococcales</taxon>
        <taxon>Thermococcaceae</taxon>
        <taxon>Thermococcus</taxon>
    </lineage>
</organism>
<keyword id="KW-0687">Ribonucleoprotein</keyword>
<keyword id="KW-0689">Ribosomal protein</keyword>
<feature type="chain" id="PRO_1000133754" description="Large ribosomal subunit protein eL40">
    <location>
        <begin position="1"/>
        <end position="52"/>
    </location>
</feature>
<dbReference type="EMBL" id="CP000855">
    <property type="protein sequence ID" value="ACJ15598.1"/>
    <property type="molecule type" value="Genomic_DNA"/>
</dbReference>
<dbReference type="RefSeq" id="WP_012571071.1">
    <property type="nucleotide sequence ID" value="NC_011529.1"/>
</dbReference>
<dbReference type="SMR" id="B6YSR1"/>
<dbReference type="STRING" id="523850.TON_0113"/>
<dbReference type="GeneID" id="74505986"/>
<dbReference type="KEGG" id="ton:TON_0113"/>
<dbReference type="PATRIC" id="fig|523850.10.peg.113"/>
<dbReference type="eggNOG" id="arCOG04049">
    <property type="taxonomic scope" value="Archaea"/>
</dbReference>
<dbReference type="HOGENOM" id="CLU_205640_0_0_2"/>
<dbReference type="OrthoDB" id="45138at2157"/>
<dbReference type="Proteomes" id="UP000002727">
    <property type="component" value="Chromosome"/>
</dbReference>
<dbReference type="GO" id="GO:1990904">
    <property type="term" value="C:ribonucleoprotein complex"/>
    <property type="evidence" value="ECO:0007669"/>
    <property type="project" value="UniProtKB-KW"/>
</dbReference>
<dbReference type="GO" id="GO:0005840">
    <property type="term" value="C:ribosome"/>
    <property type="evidence" value="ECO:0007669"/>
    <property type="project" value="UniProtKB-KW"/>
</dbReference>
<dbReference type="GO" id="GO:0003735">
    <property type="term" value="F:structural constituent of ribosome"/>
    <property type="evidence" value="ECO:0007669"/>
    <property type="project" value="InterPro"/>
</dbReference>
<dbReference type="GO" id="GO:0006412">
    <property type="term" value="P:translation"/>
    <property type="evidence" value="ECO:0007669"/>
    <property type="project" value="UniProtKB-UniRule"/>
</dbReference>
<dbReference type="Gene3D" id="4.10.1060.50">
    <property type="match status" value="1"/>
</dbReference>
<dbReference type="HAMAP" id="MF_00788">
    <property type="entry name" value="Ribosomal_eL40"/>
    <property type="match status" value="1"/>
</dbReference>
<dbReference type="InterPro" id="IPR023657">
    <property type="entry name" value="Ribosomal_eL40_arc"/>
</dbReference>
<dbReference type="InterPro" id="IPR001975">
    <property type="entry name" value="Ribosomal_eL40_dom"/>
</dbReference>
<dbReference type="InterPro" id="IPR038587">
    <property type="entry name" value="Ribosomal_eL40_sf"/>
</dbReference>
<dbReference type="InterPro" id="IPR011332">
    <property type="entry name" value="Ribosomal_zn-bd"/>
</dbReference>
<dbReference type="NCBIfam" id="NF003161">
    <property type="entry name" value="PRK04136.1"/>
    <property type="match status" value="1"/>
</dbReference>
<dbReference type="PANTHER" id="PTHR39649">
    <property type="entry name" value="50S RIBOSOMAL PROTEIN L40E"/>
    <property type="match status" value="1"/>
</dbReference>
<dbReference type="PANTHER" id="PTHR39649:SF1">
    <property type="entry name" value="LARGE RIBOSOMAL SUBUNIT PROTEIN EL40"/>
    <property type="match status" value="1"/>
</dbReference>
<dbReference type="SMART" id="SM01377">
    <property type="entry name" value="Ribosomal_L40e"/>
    <property type="match status" value="1"/>
</dbReference>
<dbReference type="SUPFAM" id="SSF57829">
    <property type="entry name" value="Zn-binding ribosomal proteins"/>
    <property type="match status" value="1"/>
</dbReference>
<gene>
    <name evidence="1" type="primary">rpl40e</name>
    <name type="ordered locus">TON_0113</name>
</gene>
<accession>B6YSR1</accession>
<name>RL40_THEON</name>
<comment type="similarity">
    <text evidence="1">Belongs to the eukaryotic ribosomal protein eL40 family.</text>
</comment>
<sequence>MARFPEAEARIFRKYICMRCGATNPWKAKKCRKCGYKGLRPKAREPRGGMGR</sequence>
<proteinExistence type="inferred from homology"/>
<reference key="1">
    <citation type="journal article" date="2008" name="J. Bacteriol.">
        <title>The complete genome sequence of Thermococcus onnurineus NA1 reveals a mixed heterotrophic and carboxydotrophic metabolism.</title>
        <authorList>
            <person name="Lee H.S."/>
            <person name="Kang S.G."/>
            <person name="Bae S.S."/>
            <person name="Lim J.K."/>
            <person name="Cho Y."/>
            <person name="Kim Y.J."/>
            <person name="Jeon J.H."/>
            <person name="Cha S.-S."/>
            <person name="Kwon K.K."/>
            <person name="Kim H.-T."/>
            <person name="Park C.-J."/>
            <person name="Lee H.-W."/>
            <person name="Kim S.I."/>
            <person name="Chun J."/>
            <person name="Colwell R.R."/>
            <person name="Kim S.-J."/>
            <person name="Lee J.-H."/>
        </authorList>
    </citation>
    <scope>NUCLEOTIDE SEQUENCE [LARGE SCALE GENOMIC DNA]</scope>
    <source>
        <strain>NA1</strain>
    </source>
</reference>